<proteinExistence type="evidence at transcript level"/>
<feature type="signal peptide" evidence="3">
    <location>
        <begin position="1"/>
        <end position="35"/>
    </location>
</feature>
<feature type="chain" id="PRO_0000042729" description="Chemokine-like protein TAFA-4">
    <location>
        <begin position="36"/>
        <end position="140"/>
    </location>
</feature>
<feature type="sequence conflict" description="In Ref. 3; BAB60784." evidence="4" ref="3">
    <original>V</original>
    <variation>L</variation>
    <location>
        <position position="19"/>
    </location>
</feature>
<accession>Q9N0D3</accession>
<accession>Q95K92</accession>
<gene>
    <name type="primary">TAFA4</name>
    <name type="synonym">FAM19A4</name>
    <name type="ORF">QccE-12230</name>
    <name type="ORF">QmoA-12486</name>
</gene>
<keyword id="KW-1185">Reference proteome</keyword>
<keyword id="KW-0964">Secreted</keyword>
<keyword id="KW-0732">Signal</keyword>
<evidence type="ECO:0000250" key="1">
    <source>
        <dbReference type="UniProtKB" id="Q7TPG5"/>
    </source>
</evidence>
<evidence type="ECO:0000250" key="2">
    <source>
        <dbReference type="UniProtKB" id="Q96LR4"/>
    </source>
</evidence>
<evidence type="ECO:0000255" key="3"/>
<evidence type="ECO:0000305" key="4"/>
<sequence length="140" mass="15640">MRSPRMRACAKSVLLSHWVFLAYVLMVCCKLMSASSQHLRGHAGHHQIKQGTCEVVAVHRCCNKNRIEERSQTVKCSCFPGQVAGTTRAQPSCVEASIVIQKWWCHMNPCLEGEDCKVLPDYSGWSCSSGNKVKTTKVTR</sequence>
<organism>
    <name type="scientific">Macaca fascicularis</name>
    <name type="common">Crab-eating macaque</name>
    <name type="synonym">Cynomolgus monkey</name>
    <dbReference type="NCBI Taxonomy" id="9541"/>
    <lineage>
        <taxon>Eukaryota</taxon>
        <taxon>Metazoa</taxon>
        <taxon>Chordata</taxon>
        <taxon>Craniata</taxon>
        <taxon>Vertebrata</taxon>
        <taxon>Euteleostomi</taxon>
        <taxon>Mammalia</taxon>
        <taxon>Eutheria</taxon>
        <taxon>Euarchontoglires</taxon>
        <taxon>Primates</taxon>
        <taxon>Haplorrhini</taxon>
        <taxon>Catarrhini</taxon>
        <taxon>Cercopithecidae</taxon>
        <taxon>Cercopithecinae</taxon>
        <taxon>Macaca</taxon>
    </lineage>
</organism>
<protein>
    <recommendedName>
        <fullName evidence="4">Chemokine-like protein TAFA-4</fullName>
    </recommendedName>
</protein>
<comment type="function">
    <text evidence="1">Modulates injury-induced and chemical pain hypersensitivity. Ligand of FPR1, can chemoattract macrophages, promote phagocytosis and increase ROS release.</text>
</comment>
<comment type="subcellular location">
    <subcellularLocation>
        <location evidence="2">Secreted</location>
    </subcellularLocation>
</comment>
<comment type="similarity">
    <text evidence="4">Belongs to the TAFA family.</text>
</comment>
<name>TAFA4_MACFA</name>
<reference key="1">
    <citation type="journal article" date="2001" name="Gene">
        <title>Assignment of 118 novel cDNAs of cynomolgus monkey brain to human chromosomes.</title>
        <authorList>
            <person name="Osada N."/>
            <person name="Hida M."/>
            <person name="Kususda J."/>
            <person name="Tanuma R."/>
            <person name="Iseki K."/>
            <person name="Hirata M."/>
            <person name="Suto Y."/>
            <person name="Hirai M."/>
            <person name="Terao K."/>
            <person name="Suzuki Y."/>
            <person name="Sugano S."/>
            <person name="Hashimoto K."/>
        </authorList>
    </citation>
    <scope>NUCLEOTIDE SEQUENCE [LARGE SCALE MRNA]</scope>
    <source>
        <tissue>Brain cortex</tissue>
    </source>
</reference>
<reference key="2">
    <citation type="journal article" date="2001" name="Gene">
        <authorList>
            <person name="Osada N."/>
            <person name="Hida M."/>
            <person name="Kusuda J."/>
            <person name="Tanuma R."/>
            <person name="Iseki K."/>
            <person name="Hirata M."/>
            <person name="Suto Y."/>
            <person name="Hirai M."/>
            <person name="Terao K."/>
            <person name="Suzuki Y."/>
            <person name="Sugano S."/>
            <person name="Hashimoto K."/>
            <person name="Kususda J."/>
        </authorList>
    </citation>
    <scope>ERRATUM OF PUBMED:11574149</scope>
</reference>
<reference key="3">
    <citation type="journal article" date="2002" name="Genome Biol.">
        <title>Prediction of unidentified human genes on the basis of sequence similarity to novel cDNAs from cynomolgus monkey brain.</title>
        <authorList>
            <person name="Osada N."/>
            <person name="Hida M."/>
            <person name="Kusuda J."/>
            <person name="Tanuma R."/>
            <person name="Hirata M."/>
            <person name="Hirai M."/>
            <person name="Terao K."/>
            <person name="Suzuki Y."/>
            <person name="Sugano S."/>
            <person name="Hashimoto K."/>
        </authorList>
    </citation>
    <scope>NUCLEOTIDE SEQUENCE [LARGE SCALE MRNA]</scope>
    <source>
        <tissue>Medulla oblongata</tissue>
    </source>
</reference>
<dbReference type="EMBL" id="AB045997">
    <property type="protein sequence ID" value="BAB01579.1"/>
    <property type="molecule type" value="mRNA"/>
</dbReference>
<dbReference type="EMBL" id="AB063062">
    <property type="protein sequence ID" value="BAB60784.1"/>
    <property type="molecule type" value="mRNA"/>
</dbReference>
<dbReference type="RefSeq" id="NP_001270650.1">
    <property type="nucleotide sequence ID" value="NM_001283721.1"/>
</dbReference>
<dbReference type="RefSeq" id="XP_005547629.1">
    <property type="nucleotide sequence ID" value="XM_005547572.2"/>
</dbReference>
<dbReference type="GeneID" id="101867350"/>
<dbReference type="CTD" id="151647"/>
<dbReference type="eggNOG" id="ENOG502RZN9">
    <property type="taxonomic scope" value="Eukaryota"/>
</dbReference>
<dbReference type="Proteomes" id="UP000233100">
    <property type="component" value="Unplaced"/>
</dbReference>
<dbReference type="GO" id="GO:0005615">
    <property type="term" value="C:extracellular space"/>
    <property type="evidence" value="ECO:0000250"/>
    <property type="project" value="UniProtKB"/>
</dbReference>
<dbReference type="GO" id="GO:0048018">
    <property type="term" value="F:receptor ligand activity"/>
    <property type="evidence" value="ECO:0000250"/>
    <property type="project" value="UniProtKB"/>
</dbReference>
<dbReference type="GO" id="GO:0048246">
    <property type="term" value="P:macrophage chemotaxis"/>
    <property type="evidence" value="ECO:0000250"/>
    <property type="project" value="UniProtKB"/>
</dbReference>
<dbReference type="GO" id="GO:0006909">
    <property type="term" value="P:phagocytosis"/>
    <property type="evidence" value="ECO:0000250"/>
    <property type="project" value="UniProtKB"/>
</dbReference>
<dbReference type="GO" id="GO:0010469">
    <property type="term" value="P:regulation of signaling receptor activity"/>
    <property type="evidence" value="ECO:0000250"/>
    <property type="project" value="UniProtKB"/>
</dbReference>
<dbReference type="GO" id="GO:0042554">
    <property type="term" value="P:superoxide anion generation"/>
    <property type="evidence" value="ECO:0000250"/>
    <property type="project" value="UniProtKB"/>
</dbReference>
<dbReference type="InterPro" id="IPR020350">
    <property type="entry name" value="Chemokine-like_TAFA"/>
</dbReference>
<dbReference type="InterPro" id="IPR051743">
    <property type="entry name" value="TAFA_chemokine-like"/>
</dbReference>
<dbReference type="PANTHER" id="PTHR31770">
    <property type="entry name" value="CHEMOKINE-LIKE PROTEIN TAFA FAMILY MEMBER"/>
    <property type="match status" value="1"/>
</dbReference>
<dbReference type="PANTHER" id="PTHR31770:SF7">
    <property type="entry name" value="CHEMOKINE-LIKE PROTEIN TAFA-4"/>
    <property type="match status" value="1"/>
</dbReference>
<dbReference type="Pfam" id="PF12020">
    <property type="entry name" value="TAFA"/>
    <property type="match status" value="1"/>
</dbReference>